<comment type="function">
    <text evidence="1">May play a role during spermatogenesis by repressing transposable elements and preventing their mobilization, which is essential for the germline integrity. Acts via the piRNA metabolic process, which mediates the repression of transposable elements during meiosis by forming complexes composed of piRNAs and Piwi proteins and govern the methylation and subsequent repression of transposons. Directly binds piRNAs, a class of 24 to 30 nucleotide RNAs that are generated by a Dicer-independent mechanism and are primarily derived from transposons and other repeated sequence elements. Besides their function in transposable elements repression, piRNAs are probably involved in other processes during meiosis such as translation regulation (By similarity).</text>
</comment>
<comment type="subcellular location">
    <subcellularLocation>
        <location evidence="6">Cytoplasm</location>
    </subcellularLocation>
    <text evidence="1">Probable component of the meiotic nuage, also named P granule, a germ-cell-specific organelle required to repress transposon activity during meiosis.</text>
</comment>
<comment type="tissue specificity">
    <text evidence="5">Expressed in testis.</text>
</comment>
<comment type="similarity">
    <text evidence="6">Belongs to the argonaute family. Piwi subfamily.</text>
</comment>
<feature type="chain" id="PRO_0000234571" description="Piwi-like protein 3">
    <location>
        <begin position="1"/>
        <end position="882"/>
    </location>
</feature>
<feature type="domain" description="PAZ" evidence="2">
    <location>
        <begin position="293"/>
        <end position="406"/>
    </location>
</feature>
<feature type="domain" description="Piwi" evidence="3">
    <location>
        <begin position="578"/>
        <end position="868"/>
    </location>
</feature>
<feature type="region of interest" description="Disordered" evidence="4">
    <location>
        <begin position="1"/>
        <end position="91"/>
    </location>
</feature>
<feature type="compositionally biased region" description="Basic residues" evidence="4">
    <location>
        <begin position="1"/>
        <end position="15"/>
    </location>
</feature>
<feature type="compositionally biased region" description="Polar residues" evidence="4">
    <location>
        <begin position="32"/>
        <end position="46"/>
    </location>
</feature>
<feature type="sequence variant" id="VAR_061024" description="In dbSNP:rs61083377.">
    <original>P</original>
    <variation>L</variation>
    <location>
        <position position="186"/>
    </location>
</feature>
<feature type="sequence variant" id="VAR_034383" description="In dbSNP:rs1475853.">
    <original>P</original>
    <variation>S</variation>
    <location>
        <position position="375"/>
    </location>
</feature>
<feature type="sequence variant" id="VAR_034384" description="In dbSNP:rs1892722.">
    <original>C</original>
    <variation>R</variation>
    <location>
        <position position="412"/>
    </location>
</feature>
<feature type="sequence variant" id="VAR_034385" description="In dbSNP:rs1892723." evidence="5">
    <original>V</original>
    <variation>M</variation>
    <location>
        <position position="418"/>
    </location>
</feature>
<feature type="sequence variant" id="VAR_054774" description="In dbSNP:rs11703684.">
    <original>V</original>
    <variation>I</variation>
    <location>
        <position position="471"/>
    </location>
</feature>
<feature type="sequence variant" id="VAR_059130" description="In dbSNP:rs738826.">
    <original>R</original>
    <variation>C</variation>
    <location>
        <position position="589"/>
    </location>
</feature>
<sequence>MPGRARTRARGRARRRESYQQEAPGGPRAPGSATTQEPPQLQSTPRPLQEEVPVVRPLQPRAARGGAGGGAQSQGVKEPGPEAGLHTAPLQERRIGGVFQDLVVNTRQDMKHVKDSKTGSEGTVVQLLANHFRVISRPQWVAYKYNVDYKPDIEDGNLRTILLDQHRRKFGERHIFDGNSLLLSRPLKERRVEWLSTTKDKNIVKITVEFSKELTPTSPDCLRYYNILFRRTFKLLDFEQVGRNYYTKKKAIQLYRHGTSLEIWLGYVTSVLQYENSITLCADVSHKLLRIETAYDFIKRTSAQAQTGNIREEVTNKLIGSIVLTKYNNKTYRVDDIDWKQNPEDTFNKSDGSKITYIDYYRQQHKEIVTVKKQPLLVSQGRWKKGLTGTQREPILLIPQLCHMTGLTDEICKDYSIVKELAKHTRLSPRRRHHTLKEFINTLQDNKKVRELLQLWDLKFDTNFLSVPGRVLKNANIVQGRRMVKANSQGDWSREIRELPLLNAMPLHSWLILYSRSSHREAMSLKGHLQSVTAPMGITMKPAEMIEVDGDANSYIDTLRKYTRPTLQMGMSCLLVFKVICILPNDDKRRYDSIKRYLCTKCPIPSQCVVKKTLEKVQARTIVTKIAQQMNCKMGGALWKVETDVQRTMFVGIDCFHDIVNRQKSIAGFVASTNAELTKWYSQCVIQKTGEELVKELEICLKAALDVWCKNESSMPHSVIVYRDGVGDGQLQALLDHEAKKMSTYLKTISPNNFTLAFIVVKKRINTRFFLKHGSNFQNPPPGTVIDVELTRNEWYDFFIVSQSVQDGTVTPTHYNVIYDTIGLSPDTVQRLTYCLCHMYYNLPGIIRVPAPCHYAHKLAYLVGQSIHQEPNRSLSTRLFYL</sequence>
<keyword id="KW-0963">Cytoplasm</keyword>
<keyword id="KW-0217">Developmental protein</keyword>
<keyword id="KW-0221">Differentiation</keyword>
<keyword id="KW-0469">Meiosis</keyword>
<keyword id="KW-1267">Proteomics identification</keyword>
<keyword id="KW-1185">Reference proteome</keyword>
<keyword id="KW-0694">RNA-binding</keyword>
<keyword id="KW-0943">RNA-mediated gene silencing</keyword>
<keyword id="KW-0744">Spermatogenesis</keyword>
<keyword id="KW-0810">Translation regulation</keyword>
<accession>Q7Z3Z3</accession>
<dbReference type="EMBL" id="AB079368">
    <property type="protein sequence ID" value="BAC81343.1"/>
    <property type="molecule type" value="mRNA"/>
</dbReference>
<dbReference type="EMBL" id="AP000358">
    <property type="status" value="NOT_ANNOTATED_CDS"/>
    <property type="molecule type" value="Genomic_DNA"/>
</dbReference>
<dbReference type="EMBL" id="AP000359">
    <property type="status" value="NOT_ANNOTATED_CDS"/>
    <property type="molecule type" value="Genomic_DNA"/>
</dbReference>
<dbReference type="CCDS" id="CCDS33623.1"/>
<dbReference type="RefSeq" id="NP_001008496.2">
    <property type="nucleotide sequence ID" value="NM_001008496.3"/>
</dbReference>
<dbReference type="SMR" id="Q7Z3Z3"/>
<dbReference type="BioGRID" id="136921">
    <property type="interactions" value="7"/>
</dbReference>
<dbReference type="FunCoup" id="Q7Z3Z3">
    <property type="interactions" value="19"/>
</dbReference>
<dbReference type="IntAct" id="Q7Z3Z3">
    <property type="interactions" value="1"/>
</dbReference>
<dbReference type="STRING" id="9606.ENSP00000330031"/>
<dbReference type="iPTMnet" id="Q7Z3Z3"/>
<dbReference type="PhosphoSitePlus" id="Q7Z3Z3"/>
<dbReference type="BioMuta" id="PIWIL3"/>
<dbReference type="DMDM" id="229485673"/>
<dbReference type="jPOST" id="Q7Z3Z3"/>
<dbReference type="MassIVE" id="Q7Z3Z3"/>
<dbReference type="PaxDb" id="9606-ENSP00000330031"/>
<dbReference type="PeptideAtlas" id="Q7Z3Z3"/>
<dbReference type="Antibodypedia" id="24076">
    <property type="antibodies" value="86 antibodies from 25 providers"/>
</dbReference>
<dbReference type="DNASU" id="440822"/>
<dbReference type="Ensembl" id="ENST00000332271.9">
    <property type="protein sequence ID" value="ENSP00000330031.5"/>
    <property type="gene ID" value="ENSG00000184571.14"/>
</dbReference>
<dbReference type="GeneID" id="440822"/>
<dbReference type="KEGG" id="hsa:440822"/>
<dbReference type="UCSC" id="uc003abd.3">
    <property type="organism name" value="human"/>
</dbReference>
<dbReference type="AGR" id="HGNC:18443"/>
<dbReference type="CTD" id="440822"/>
<dbReference type="DisGeNET" id="440822"/>
<dbReference type="GeneCards" id="PIWIL3"/>
<dbReference type="HGNC" id="HGNC:18443">
    <property type="gene designation" value="PIWIL3"/>
</dbReference>
<dbReference type="HPA" id="ENSG00000184571">
    <property type="expression patterns" value="Not detected"/>
</dbReference>
<dbReference type="MIM" id="610314">
    <property type="type" value="gene"/>
</dbReference>
<dbReference type="neXtProt" id="NX_Q7Z3Z3"/>
<dbReference type="OpenTargets" id="ENSG00000184571"/>
<dbReference type="PharmGKB" id="PA38332"/>
<dbReference type="VEuPathDB" id="HostDB:ENSG00000184571"/>
<dbReference type="eggNOG" id="KOG1042">
    <property type="taxonomic scope" value="Eukaryota"/>
</dbReference>
<dbReference type="GeneTree" id="ENSGT00950000183200"/>
<dbReference type="InParanoid" id="Q7Z3Z3"/>
<dbReference type="OMA" id="NTRRYMM"/>
<dbReference type="OrthoDB" id="445936at2759"/>
<dbReference type="PAN-GO" id="Q7Z3Z3">
    <property type="GO annotations" value="4 GO annotations based on evolutionary models"/>
</dbReference>
<dbReference type="PhylomeDB" id="Q7Z3Z3"/>
<dbReference type="TreeFam" id="TF354206"/>
<dbReference type="PathwayCommons" id="Q7Z3Z3"/>
<dbReference type="SignaLink" id="Q7Z3Z3"/>
<dbReference type="BioGRID-ORCS" id="440822">
    <property type="hits" value="16 hits in 1144 CRISPR screens"/>
</dbReference>
<dbReference type="ChiTaRS" id="PIWIL3">
    <property type="organism name" value="human"/>
</dbReference>
<dbReference type="GenomeRNAi" id="440822"/>
<dbReference type="Pharos" id="Q7Z3Z3">
    <property type="development level" value="Tbio"/>
</dbReference>
<dbReference type="PRO" id="PR:Q7Z3Z3"/>
<dbReference type="Proteomes" id="UP000005640">
    <property type="component" value="Chromosome 22"/>
</dbReference>
<dbReference type="RNAct" id="Q7Z3Z3">
    <property type="molecule type" value="protein"/>
</dbReference>
<dbReference type="Bgee" id="ENSG00000184571">
    <property type="expression patterns" value="Expressed in male germ line stem cell (sensu Vertebrata) in testis and 4 other cell types or tissues"/>
</dbReference>
<dbReference type="ExpressionAtlas" id="Q7Z3Z3">
    <property type="expression patterns" value="baseline and differential"/>
</dbReference>
<dbReference type="GO" id="GO:0005737">
    <property type="term" value="C:cytoplasm"/>
    <property type="evidence" value="ECO:0000314"/>
    <property type="project" value="UniProtKB"/>
</dbReference>
<dbReference type="GO" id="GO:0005634">
    <property type="term" value="C:nucleus"/>
    <property type="evidence" value="ECO:0000314"/>
    <property type="project" value="UniProtKB"/>
</dbReference>
<dbReference type="GO" id="GO:0043186">
    <property type="term" value="C:P granule"/>
    <property type="evidence" value="ECO:0000318"/>
    <property type="project" value="GO_Central"/>
</dbReference>
<dbReference type="GO" id="GO:0034584">
    <property type="term" value="F:piRNA binding"/>
    <property type="evidence" value="ECO:0000318"/>
    <property type="project" value="GO_Central"/>
</dbReference>
<dbReference type="GO" id="GO:0004521">
    <property type="term" value="F:RNA endonuclease activity"/>
    <property type="evidence" value="ECO:0000318"/>
    <property type="project" value="GO_Central"/>
</dbReference>
<dbReference type="GO" id="GO:0030154">
    <property type="term" value="P:cell differentiation"/>
    <property type="evidence" value="ECO:0007669"/>
    <property type="project" value="UniProtKB-KW"/>
</dbReference>
<dbReference type="GO" id="GO:0051321">
    <property type="term" value="P:meiotic cell cycle"/>
    <property type="evidence" value="ECO:0007669"/>
    <property type="project" value="UniProtKB-KW"/>
</dbReference>
<dbReference type="GO" id="GO:0034587">
    <property type="term" value="P:piRNA processing"/>
    <property type="evidence" value="ECO:0000318"/>
    <property type="project" value="GO_Central"/>
</dbReference>
<dbReference type="GO" id="GO:0006417">
    <property type="term" value="P:regulation of translation"/>
    <property type="evidence" value="ECO:0007669"/>
    <property type="project" value="UniProtKB-KW"/>
</dbReference>
<dbReference type="GO" id="GO:0031047">
    <property type="term" value="P:regulatory ncRNA-mediated gene silencing"/>
    <property type="evidence" value="ECO:0000318"/>
    <property type="project" value="GO_Central"/>
</dbReference>
<dbReference type="GO" id="GO:0007283">
    <property type="term" value="P:spermatogenesis"/>
    <property type="evidence" value="ECO:0000318"/>
    <property type="project" value="GO_Central"/>
</dbReference>
<dbReference type="CDD" id="cd02845">
    <property type="entry name" value="PAZ_piwi_like"/>
    <property type="match status" value="1"/>
</dbReference>
<dbReference type="CDD" id="cd04658">
    <property type="entry name" value="Piwi_piwi-like_Euk"/>
    <property type="match status" value="1"/>
</dbReference>
<dbReference type="FunFam" id="3.30.420.10:FF:000014">
    <property type="entry name" value="Piwi-like RNA-mediated gene silencing 1"/>
    <property type="match status" value="1"/>
</dbReference>
<dbReference type="FunFam" id="2.170.260.10:FF:000003">
    <property type="entry name" value="Piwi-like RNA-mediated gene silencing 2"/>
    <property type="match status" value="1"/>
</dbReference>
<dbReference type="Gene3D" id="3.40.50.2300">
    <property type="match status" value="1"/>
</dbReference>
<dbReference type="Gene3D" id="2.170.260.10">
    <property type="entry name" value="paz domain"/>
    <property type="match status" value="1"/>
</dbReference>
<dbReference type="Gene3D" id="3.30.420.10">
    <property type="entry name" value="Ribonuclease H-like superfamily/Ribonuclease H"/>
    <property type="match status" value="1"/>
</dbReference>
<dbReference type="InterPro" id="IPR003100">
    <property type="entry name" value="PAZ_dom"/>
</dbReference>
<dbReference type="InterPro" id="IPR036085">
    <property type="entry name" value="PAZ_dom_sf"/>
</dbReference>
<dbReference type="InterPro" id="IPR003165">
    <property type="entry name" value="Piwi"/>
</dbReference>
<dbReference type="InterPro" id="IPR012337">
    <property type="entry name" value="RNaseH-like_sf"/>
</dbReference>
<dbReference type="InterPro" id="IPR036397">
    <property type="entry name" value="RNaseH_sf"/>
</dbReference>
<dbReference type="PANTHER" id="PTHR22891">
    <property type="entry name" value="EUKARYOTIC TRANSLATION INITIATION FACTOR 2C"/>
    <property type="match status" value="1"/>
</dbReference>
<dbReference type="Pfam" id="PF02170">
    <property type="entry name" value="PAZ"/>
    <property type="match status" value="1"/>
</dbReference>
<dbReference type="Pfam" id="PF02171">
    <property type="entry name" value="Piwi"/>
    <property type="match status" value="1"/>
</dbReference>
<dbReference type="SMART" id="SM00949">
    <property type="entry name" value="PAZ"/>
    <property type="match status" value="1"/>
</dbReference>
<dbReference type="SMART" id="SM00950">
    <property type="entry name" value="Piwi"/>
    <property type="match status" value="1"/>
</dbReference>
<dbReference type="SUPFAM" id="SSF101690">
    <property type="entry name" value="PAZ domain"/>
    <property type="match status" value="1"/>
</dbReference>
<dbReference type="SUPFAM" id="SSF53098">
    <property type="entry name" value="Ribonuclease H-like"/>
    <property type="match status" value="1"/>
</dbReference>
<dbReference type="PROSITE" id="PS50821">
    <property type="entry name" value="PAZ"/>
    <property type="match status" value="1"/>
</dbReference>
<dbReference type="PROSITE" id="PS50822">
    <property type="entry name" value="PIWI"/>
    <property type="match status" value="1"/>
</dbReference>
<gene>
    <name type="primary">PIWIL3</name>
</gene>
<reference key="1">
    <citation type="journal article" date="2003" name="Genomics">
        <title>Identification of eight members of the Argonaute family in the human genome.</title>
        <authorList>
            <person name="Sasaki T."/>
            <person name="Shiohama A."/>
            <person name="Minoshima S."/>
            <person name="Shimizu N."/>
        </authorList>
    </citation>
    <scope>NUCLEOTIDE SEQUENCE [MRNA]</scope>
    <scope>TISSUE SPECIFICITY</scope>
    <scope>VARIANT MET-418</scope>
</reference>
<reference key="2">
    <citation type="journal article" date="1999" name="Nature">
        <title>The DNA sequence of human chromosome 22.</title>
        <authorList>
            <person name="Dunham I."/>
            <person name="Hunt A.R."/>
            <person name="Collins J.E."/>
            <person name="Bruskiewich R."/>
            <person name="Beare D.M."/>
            <person name="Clamp M."/>
            <person name="Smink L.J."/>
            <person name="Ainscough R."/>
            <person name="Almeida J.P."/>
            <person name="Babbage A.K."/>
            <person name="Bagguley C."/>
            <person name="Bailey J."/>
            <person name="Barlow K.F."/>
            <person name="Bates K.N."/>
            <person name="Beasley O.P."/>
            <person name="Bird C.P."/>
            <person name="Blakey S.E."/>
            <person name="Bridgeman A.M."/>
            <person name="Buck D."/>
            <person name="Burgess J."/>
            <person name="Burrill W.D."/>
            <person name="Burton J."/>
            <person name="Carder C."/>
            <person name="Carter N.P."/>
            <person name="Chen Y."/>
            <person name="Clark G."/>
            <person name="Clegg S.M."/>
            <person name="Cobley V.E."/>
            <person name="Cole C.G."/>
            <person name="Collier R.E."/>
            <person name="Connor R."/>
            <person name="Conroy D."/>
            <person name="Corby N.R."/>
            <person name="Coville G.J."/>
            <person name="Cox A.V."/>
            <person name="Davis J."/>
            <person name="Dawson E."/>
            <person name="Dhami P.D."/>
            <person name="Dockree C."/>
            <person name="Dodsworth S.J."/>
            <person name="Durbin R.M."/>
            <person name="Ellington A.G."/>
            <person name="Evans K.L."/>
            <person name="Fey J.M."/>
            <person name="Fleming K."/>
            <person name="French L."/>
            <person name="Garner A.A."/>
            <person name="Gilbert J.G.R."/>
            <person name="Goward M.E."/>
            <person name="Grafham D.V."/>
            <person name="Griffiths M.N.D."/>
            <person name="Hall C."/>
            <person name="Hall R.E."/>
            <person name="Hall-Tamlyn G."/>
            <person name="Heathcott R.W."/>
            <person name="Ho S."/>
            <person name="Holmes S."/>
            <person name="Hunt S.E."/>
            <person name="Jones M.C."/>
            <person name="Kershaw J."/>
            <person name="Kimberley A.M."/>
            <person name="King A."/>
            <person name="Laird G.K."/>
            <person name="Langford C.F."/>
            <person name="Leversha M.A."/>
            <person name="Lloyd C."/>
            <person name="Lloyd D.M."/>
            <person name="Martyn I.D."/>
            <person name="Mashreghi-Mohammadi M."/>
            <person name="Matthews L.H."/>
            <person name="Mccann O.T."/>
            <person name="Mcclay J."/>
            <person name="Mclaren S."/>
            <person name="McMurray A.A."/>
            <person name="Milne S.A."/>
            <person name="Mortimore B.J."/>
            <person name="Odell C.N."/>
            <person name="Pavitt R."/>
            <person name="Pearce A.V."/>
            <person name="Pearson D."/>
            <person name="Phillimore B.J.C.T."/>
            <person name="Phillips S.H."/>
            <person name="Plumb R.W."/>
            <person name="Ramsay H."/>
            <person name="Ramsey Y."/>
            <person name="Rogers L."/>
            <person name="Ross M.T."/>
            <person name="Scott C.E."/>
            <person name="Sehra H.K."/>
            <person name="Skuce C.D."/>
            <person name="Smalley S."/>
            <person name="Smith M.L."/>
            <person name="Soderlund C."/>
            <person name="Spragon L."/>
            <person name="Steward C.A."/>
            <person name="Sulston J.E."/>
            <person name="Swann R.M."/>
            <person name="Vaudin M."/>
            <person name="Wall M."/>
            <person name="Wallis J.M."/>
            <person name="Whiteley M.N."/>
            <person name="Willey D.L."/>
            <person name="Williams L."/>
            <person name="Williams S.A."/>
            <person name="Williamson H."/>
            <person name="Wilmer T.E."/>
            <person name="Wilming L."/>
            <person name="Wright C.L."/>
            <person name="Hubbard T."/>
            <person name="Bentley D.R."/>
            <person name="Beck S."/>
            <person name="Rogers J."/>
            <person name="Shimizu N."/>
            <person name="Minoshima S."/>
            <person name="Kawasaki K."/>
            <person name="Sasaki T."/>
            <person name="Asakawa S."/>
            <person name="Kudoh J."/>
            <person name="Shintani A."/>
            <person name="Shibuya K."/>
            <person name="Yoshizaki Y."/>
            <person name="Aoki N."/>
            <person name="Mitsuyama S."/>
            <person name="Roe B.A."/>
            <person name="Chen F."/>
            <person name="Chu L."/>
            <person name="Crabtree J."/>
            <person name="Deschamps S."/>
            <person name="Do A."/>
            <person name="Do T."/>
            <person name="Dorman A."/>
            <person name="Fang F."/>
            <person name="Fu Y."/>
            <person name="Hu P."/>
            <person name="Hua A."/>
            <person name="Kenton S."/>
            <person name="Lai H."/>
            <person name="Lao H.I."/>
            <person name="Lewis J."/>
            <person name="Lewis S."/>
            <person name="Lin S.-P."/>
            <person name="Loh P."/>
            <person name="Malaj E."/>
            <person name="Nguyen T."/>
            <person name="Pan H."/>
            <person name="Phan S."/>
            <person name="Qi S."/>
            <person name="Qian Y."/>
            <person name="Ray L."/>
            <person name="Ren Q."/>
            <person name="Shaull S."/>
            <person name="Sloan D."/>
            <person name="Song L."/>
            <person name="Wang Q."/>
            <person name="Wang Y."/>
            <person name="Wang Z."/>
            <person name="White J."/>
            <person name="Willingham D."/>
            <person name="Wu H."/>
            <person name="Yao Z."/>
            <person name="Zhan M."/>
            <person name="Zhang G."/>
            <person name="Chissoe S."/>
            <person name="Murray J."/>
            <person name="Miller N."/>
            <person name="Minx P."/>
            <person name="Fulton R."/>
            <person name="Johnson D."/>
            <person name="Bemis G."/>
            <person name="Bentley D."/>
            <person name="Bradshaw H."/>
            <person name="Bourne S."/>
            <person name="Cordes M."/>
            <person name="Du Z."/>
            <person name="Fulton L."/>
            <person name="Goela D."/>
            <person name="Graves T."/>
            <person name="Hawkins J."/>
            <person name="Hinds K."/>
            <person name="Kemp K."/>
            <person name="Latreille P."/>
            <person name="Layman D."/>
            <person name="Ozersky P."/>
            <person name="Rohlfing T."/>
            <person name="Scheet P."/>
            <person name="Walker C."/>
            <person name="Wamsley A."/>
            <person name="Wohldmann P."/>
            <person name="Pepin K."/>
            <person name="Nelson J."/>
            <person name="Korf I."/>
            <person name="Bedell J.A."/>
            <person name="Hillier L.W."/>
            <person name="Mardis E."/>
            <person name="Waterston R."/>
            <person name="Wilson R."/>
            <person name="Emanuel B.S."/>
            <person name="Shaikh T."/>
            <person name="Kurahashi H."/>
            <person name="Saitta S."/>
            <person name="Budarf M.L."/>
            <person name="McDermid H.E."/>
            <person name="Johnson A."/>
            <person name="Wong A.C.C."/>
            <person name="Morrow B.E."/>
            <person name="Edelmann L."/>
            <person name="Kim U.J."/>
            <person name="Shizuya H."/>
            <person name="Simon M.I."/>
            <person name="Dumanski J.P."/>
            <person name="Peyrard M."/>
            <person name="Kedra D."/>
            <person name="Seroussi E."/>
            <person name="Fransson I."/>
            <person name="Tapia I."/>
            <person name="Bruder C.E."/>
            <person name="O'Brien K.P."/>
            <person name="Wilkinson P."/>
            <person name="Bodenteich A."/>
            <person name="Hartman K."/>
            <person name="Hu X."/>
            <person name="Khan A.S."/>
            <person name="Lane L."/>
            <person name="Tilahun Y."/>
            <person name="Wright H."/>
        </authorList>
    </citation>
    <scope>NUCLEOTIDE SEQUENCE [LARGE SCALE GENOMIC DNA]</scope>
</reference>
<evidence type="ECO:0000250" key="1">
    <source>
        <dbReference type="UniProtKB" id="Q9JMB7"/>
    </source>
</evidence>
<evidence type="ECO:0000255" key="2">
    <source>
        <dbReference type="PROSITE-ProRule" id="PRU00142"/>
    </source>
</evidence>
<evidence type="ECO:0000255" key="3">
    <source>
        <dbReference type="PROSITE-ProRule" id="PRU00150"/>
    </source>
</evidence>
<evidence type="ECO:0000256" key="4">
    <source>
        <dbReference type="SAM" id="MobiDB-lite"/>
    </source>
</evidence>
<evidence type="ECO:0000269" key="5">
    <source>
    </source>
</evidence>
<evidence type="ECO:0000305" key="6"/>
<name>PIWL3_HUMAN</name>
<proteinExistence type="evidence at protein level"/>
<organism>
    <name type="scientific">Homo sapiens</name>
    <name type="common">Human</name>
    <dbReference type="NCBI Taxonomy" id="9606"/>
    <lineage>
        <taxon>Eukaryota</taxon>
        <taxon>Metazoa</taxon>
        <taxon>Chordata</taxon>
        <taxon>Craniata</taxon>
        <taxon>Vertebrata</taxon>
        <taxon>Euteleostomi</taxon>
        <taxon>Mammalia</taxon>
        <taxon>Eutheria</taxon>
        <taxon>Euarchontoglires</taxon>
        <taxon>Primates</taxon>
        <taxon>Haplorrhini</taxon>
        <taxon>Catarrhini</taxon>
        <taxon>Hominidae</taxon>
        <taxon>Homo</taxon>
    </lineage>
</organism>
<protein>
    <recommendedName>
        <fullName>Piwi-like protein 3</fullName>
    </recommendedName>
</protein>